<protein>
    <recommendedName>
        <fullName evidence="1">Enolase</fullName>
        <ecNumber evidence="1">4.2.1.11</ecNumber>
    </recommendedName>
    <alternativeName>
        <fullName evidence="1">2-phospho-D-glycerate hydro-lyase</fullName>
    </alternativeName>
    <alternativeName>
        <fullName evidence="1">2-phosphoglycerate dehydratase</fullName>
    </alternativeName>
</protein>
<dbReference type="EC" id="4.2.1.11" evidence="1"/>
<dbReference type="EMBL" id="CP000387">
    <property type="protein sequence ID" value="ABN44312.1"/>
    <property type="molecule type" value="Genomic_DNA"/>
</dbReference>
<dbReference type="RefSeq" id="WP_002897814.1">
    <property type="nucleotide sequence ID" value="NC_009009.1"/>
</dbReference>
<dbReference type="RefSeq" id="YP_001034862.1">
    <property type="nucleotide sequence ID" value="NC_009009.1"/>
</dbReference>
<dbReference type="SMR" id="A3CMA7"/>
<dbReference type="STRING" id="388919.SSA_0886"/>
<dbReference type="DrugBank" id="DB09325">
    <property type="generic name" value="Sodium fluoride"/>
</dbReference>
<dbReference type="GeneID" id="48425302"/>
<dbReference type="KEGG" id="ssa:SSA_0886"/>
<dbReference type="PATRIC" id="fig|388919.9.peg.847"/>
<dbReference type="eggNOG" id="COG0148">
    <property type="taxonomic scope" value="Bacteria"/>
</dbReference>
<dbReference type="HOGENOM" id="CLU_031223_2_1_9"/>
<dbReference type="OrthoDB" id="9804716at2"/>
<dbReference type="UniPathway" id="UPA00109">
    <property type="reaction ID" value="UER00187"/>
</dbReference>
<dbReference type="Proteomes" id="UP000002148">
    <property type="component" value="Chromosome"/>
</dbReference>
<dbReference type="GO" id="GO:0009986">
    <property type="term" value="C:cell surface"/>
    <property type="evidence" value="ECO:0007669"/>
    <property type="project" value="UniProtKB-SubCell"/>
</dbReference>
<dbReference type="GO" id="GO:0005576">
    <property type="term" value="C:extracellular region"/>
    <property type="evidence" value="ECO:0007669"/>
    <property type="project" value="UniProtKB-SubCell"/>
</dbReference>
<dbReference type="GO" id="GO:0009274">
    <property type="term" value="C:peptidoglycan-based cell wall"/>
    <property type="evidence" value="ECO:0007669"/>
    <property type="project" value="UniProtKB-ARBA"/>
</dbReference>
<dbReference type="GO" id="GO:0000015">
    <property type="term" value="C:phosphopyruvate hydratase complex"/>
    <property type="evidence" value="ECO:0007669"/>
    <property type="project" value="InterPro"/>
</dbReference>
<dbReference type="GO" id="GO:0000287">
    <property type="term" value="F:magnesium ion binding"/>
    <property type="evidence" value="ECO:0007669"/>
    <property type="project" value="UniProtKB-UniRule"/>
</dbReference>
<dbReference type="GO" id="GO:0004634">
    <property type="term" value="F:phosphopyruvate hydratase activity"/>
    <property type="evidence" value="ECO:0007669"/>
    <property type="project" value="UniProtKB-UniRule"/>
</dbReference>
<dbReference type="GO" id="GO:0006096">
    <property type="term" value="P:glycolytic process"/>
    <property type="evidence" value="ECO:0007669"/>
    <property type="project" value="UniProtKB-UniRule"/>
</dbReference>
<dbReference type="CDD" id="cd03313">
    <property type="entry name" value="enolase"/>
    <property type="match status" value="1"/>
</dbReference>
<dbReference type="FunFam" id="3.20.20.120:FF:000001">
    <property type="entry name" value="Enolase"/>
    <property type="match status" value="1"/>
</dbReference>
<dbReference type="FunFam" id="3.30.390.10:FF:000001">
    <property type="entry name" value="Enolase"/>
    <property type="match status" value="1"/>
</dbReference>
<dbReference type="Gene3D" id="3.20.20.120">
    <property type="entry name" value="Enolase-like C-terminal domain"/>
    <property type="match status" value="1"/>
</dbReference>
<dbReference type="Gene3D" id="3.30.390.10">
    <property type="entry name" value="Enolase-like, N-terminal domain"/>
    <property type="match status" value="1"/>
</dbReference>
<dbReference type="HAMAP" id="MF_00318">
    <property type="entry name" value="Enolase"/>
    <property type="match status" value="1"/>
</dbReference>
<dbReference type="InterPro" id="IPR000941">
    <property type="entry name" value="Enolase"/>
</dbReference>
<dbReference type="InterPro" id="IPR036849">
    <property type="entry name" value="Enolase-like_C_sf"/>
</dbReference>
<dbReference type="InterPro" id="IPR029017">
    <property type="entry name" value="Enolase-like_N"/>
</dbReference>
<dbReference type="InterPro" id="IPR020810">
    <property type="entry name" value="Enolase_C"/>
</dbReference>
<dbReference type="InterPro" id="IPR020809">
    <property type="entry name" value="Enolase_CS"/>
</dbReference>
<dbReference type="InterPro" id="IPR020811">
    <property type="entry name" value="Enolase_N"/>
</dbReference>
<dbReference type="NCBIfam" id="TIGR01060">
    <property type="entry name" value="eno"/>
    <property type="match status" value="1"/>
</dbReference>
<dbReference type="PANTHER" id="PTHR11902">
    <property type="entry name" value="ENOLASE"/>
    <property type="match status" value="1"/>
</dbReference>
<dbReference type="PANTHER" id="PTHR11902:SF1">
    <property type="entry name" value="ENOLASE"/>
    <property type="match status" value="1"/>
</dbReference>
<dbReference type="Pfam" id="PF00113">
    <property type="entry name" value="Enolase_C"/>
    <property type="match status" value="1"/>
</dbReference>
<dbReference type="Pfam" id="PF03952">
    <property type="entry name" value="Enolase_N"/>
    <property type="match status" value="1"/>
</dbReference>
<dbReference type="PIRSF" id="PIRSF001400">
    <property type="entry name" value="Enolase"/>
    <property type="match status" value="1"/>
</dbReference>
<dbReference type="PRINTS" id="PR00148">
    <property type="entry name" value="ENOLASE"/>
</dbReference>
<dbReference type="SFLD" id="SFLDS00001">
    <property type="entry name" value="Enolase"/>
    <property type="match status" value="1"/>
</dbReference>
<dbReference type="SFLD" id="SFLDF00002">
    <property type="entry name" value="enolase"/>
    <property type="match status" value="1"/>
</dbReference>
<dbReference type="SMART" id="SM01192">
    <property type="entry name" value="Enolase_C"/>
    <property type="match status" value="1"/>
</dbReference>
<dbReference type="SMART" id="SM01193">
    <property type="entry name" value="Enolase_N"/>
    <property type="match status" value="1"/>
</dbReference>
<dbReference type="SUPFAM" id="SSF51604">
    <property type="entry name" value="Enolase C-terminal domain-like"/>
    <property type="match status" value="1"/>
</dbReference>
<dbReference type="SUPFAM" id="SSF54826">
    <property type="entry name" value="Enolase N-terminal domain-like"/>
    <property type="match status" value="1"/>
</dbReference>
<dbReference type="PROSITE" id="PS00164">
    <property type="entry name" value="ENOLASE"/>
    <property type="match status" value="1"/>
</dbReference>
<organism>
    <name type="scientific">Streptococcus sanguinis (strain SK36)</name>
    <dbReference type="NCBI Taxonomy" id="388919"/>
    <lineage>
        <taxon>Bacteria</taxon>
        <taxon>Bacillati</taxon>
        <taxon>Bacillota</taxon>
        <taxon>Bacilli</taxon>
        <taxon>Lactobacillales</taxon>
        <taxon>Streptococcaceae</taxon>
        <taxon>Streptococcus</taxon>
    </lineage>
</organism>
<evidence type="ECO:0000255" key="1">
    <source>
        <dbReference type="HAMAP-Rule" id="MF_00318"/>
    </source>
</evidence>
<sequence length="434" mass="47030">MSIITDVYAREVLDSRGNPTLEVEVYTESGAFGRGMVPSGASTGEHEAVELRDGDKSRYGGLGTQKAVDNVNNVIAEAIIGYDVRDQQAIDRAMIALDGTPNKGKLGANAILGVSIAVARAAADYLEVPLYSYLGGFNTKVLPTPMMNIINGGSHSDAPIAFQEFMILPVGAPTFKEALRYGAEIFHALKKILKSRGLETAVGDEGGFAPRFEGTEDGVETIIAAIEAAGYVPGKDVFIGFDCASSEFYDKERKVYDYTKFEGEGAAVRTSAEQIDYLEELVNKYPIITIEDGMDENDWDGWKALTERLGKKVQLVGDDFFVTNTDYLARGIKEGAANSILIKVNQIGTLTETFEAIEMAKEAGYTAVVSHRSGETEDSTIADIAVATNAGQIKTGSLSRTDRIAKYNQLLRIEDQLGEVAQYKGLQAFYNLKK</sequence>
<accession>A3CMA7</accession>
<keyword id="KW-0963">Cytoplasm</keyword>
<keyword id="KW-0324">Glycolysis</keyword>
<keyword id="KW-0456">Lyase</keyword>
<keyword id="KW-0460">Magnesium</keyword>
<keyword id="KW-0479">Metal-binding</keyword>
<keyword id="KW-1185">Reference proteome</keyword>
<keyword id="KW-0964">Secreted</keyword>
<comment type="function">
    <text evidence="1">Catalyzes the reversible conversion of 2-phosphoglycerate (2-PG) into phosphoenolpyruvate (PEP). It is essential for the degradation of carbohydrates via glycolysis.</text>
</comment>
<comment type="catalytic activity">
    <reaction evidence="1">
        <text>(2R)-2-phosphoglycerate = phosphoenolpyruvate + H2O</text>
        <dbReference type="Rhea" id="RHEA:10164"/>
        <dbReference type="ChEBI" id="CHEBI:15377"/>
        <dbReference type="ChEBI" id="CHEBI:58289"/>
        <dbReference type="ChEBI" id="CHEBI:58702"/>
        <dbReference type="EC" id="4.2.1.11"/>
    </reaction>
</comment>
<comment type="cofactor">
    <cofactor evidence="1">
        <name>Mg(2+)</name>
        <dbReference type="ChEBI" id="CHEBI:18420"/>
    </cofactor>
    <text evidence="1">Binds a second Mg(2+) ion via substrate during catalysis.</text>
</comment>
<comment type="pathway">
    <text evidence="1">Carbohydrate degradation; glycolysis; pyruvate from D-glyceraldehyde 3-phosphate: step 4/5.</text>
</comment>
<comment type="subcellular location">
    <subcellularLocation>
        <location evidence="1">Cytoplasm</location>
    </subcellularLocation>
    <subcellularLocation>
        <location evidence="1">Secreted</location>
    </subcellularLocation>
    <subcellularLocation>
        <location evidence="1">Cell surface</location>
    </subcellularLocation>
    <text evidence="1">Fractions of enolase are present in both the cytoplasm and on the cell surface.</text>
</comment>
<comment type="similarity">
    <text evidence="1">Belongs to the enolase family.</text>
</comment>
<gene>
    <name evidence="1" type="primary">eno</name>
    <name type="ordered locus">SSA_0886</name>
</gene>
<proteinExistence type="inferred from homology"/>
<reference key="1">
    <citation type="journal article" date="2007" name="J. Bacteriol.">
        <title>Genome of the opportunistic pathogen Streptococcus sanguinis.</title>
        <authorList>
            <person name="Xu P."/>
            <person name="Alves J.M."/>
            <person name="Kitten T."/>
            <person name="Brown A."/>
            <person name="Chen Z."/>
            <person name="Ozaki L.S."/>
            <person name="Manque P."/>
            <person name="Ge X."/>
            <person name="Serrano M.G."/>
            <person name="Puiu D."/>
            <person name="Hendricks S."/>
            <person name="Wang Y."/>
            <person name="Chaplin M.D."/>
            <person name="Akan D."/>
            <person name="Paik S."/>
            <person name="Peterson D.L."/>
            <person name="Macrina F.L."/>
            <person name="Buck G.A."/>
        </authorList>
    </citation>
    <scope>NUCLEOTIDE SEQUENCE [LARGE SCALE GENOMIC DNA]</scope>
    <source>
        <strain>SK36</strain>
    </source>
</reference>
<feature type="chain" id="PRO_1000019255" description="Enolase">
    <location>
        <begin position="1"/>
        <end position="434"/>
    </location>
</feature>
<feature type="active site" description="Proton donor" evidence="1">
    <location>
        <position position="205"/>
    </location>
</feature>
<feature type="active site" description="Proton acceptor" evidence="1">
    <location>
        <position position="343"/>
    </location>
</feature>
<feature type="binding site" evidence="1">
    <location>
        <position position="163"/>
    </location>
    <ligand>
        <name>(2R)-2-phosphoglycerate</name>
        <dbReference type="ChEBI" id="CHEBI:58289"/>
    </ligand>
</feature>
<feature type="binding site" evidence="1">
    <location>
        <position position="242"/>
    </location>
    <ligand>
        <name>Mg(2+)</name>
        <dbReference type="ChEBI" id="CHEBI:18420"/>
    </ligand>
</feature>
<feature type="binding site" evidence="1">
    <location>
        <position position="291"/>
    </location>
    <ligand>
        <name>Mg(2+)</name>
        <dbReference type="ChEBI" id="CHEBI:18420"/>
    </ligand>
</feature>
<feature type="binding site" evidence="1">
    <location>
        <position position="318"/>
    </location>
    <ligand>
        <name>Mg(2+)</name>
        <dbReference type="ChEBI" id="CHEBI:18420"/>
    </ligand>
</feature>
<feature type="binding site" evidence="1">
    <location>
        <position position="343"/>
    </location>
    <ligand>
        <name>(2R)-2-phosphoglycerate</name>
        <dbReference type="ChEBI" id="CHEBI:58289"/>
    </ligand>
</feature>
<feature type="binding site" evidence="1">
    <location>
        <position position="372"/>
    </location>
    <ligand>
        <name>(2R)-2-phosphoglycerate</name>
        <dbReference type="ChEBI" id="CHEBI:58289"/>
    </ligand>
</feature>
<feature type="binding site" evidence="1">
    <location>
        <position position="373"/>
    </location>
    <ligand>
        <name>(2R)-2-phosphoglycerate</name>
        <dbReference type="ChEBI" id="CHEBI:58289"/>
    </ligand>
</feature>
<feature type="binding site" evidence="1">
    <location>
        <position position="394"/>
    </location>
    <ligand>
        <name>(2R)-2-phosphoglycerate</name>
        <dbReference type="ChEBI" id="CHEBI:58289"/>
    </ligand>
</feature>
<name>ENO_STRSV</name>